<gene>
    <name evidence="1" type="primary">metG</name>
    <name type="synonym">metS</name>
    <name type="ordered locus">SAV0490</name>
</gene>
<organism>
    <name type="scientific">Staphylococcus aureus (strain Mu50 / ATCC 700699)</name>
    <dbReference type="NCBI Taxonomy" id="158878"/>
    <lineage>
        <taxon>Bacteria</taxon>
        <taxon>Bacillati</taxon>
        <taxon>Bacillota</taxon>
        <taxon>Bacilli</taxon>
        <taxon>Bacillales</taxon>
        <taxon>Staphylococcaceae</taxon>
        <taxon>Staphylococcus</taxon>
    </lineage>
</organism>
<dbReference type="EC" id="6.1.1.10" evidence="1"/>
<dbReference type="EMBL" id="BA000017">
    <property type="protein sequence ID" value="BAB56652.1"/>
    <property type="molecule type" value="Genomic_DNA"/>
</dbReference>
<dbReference type="RefSeq" id="WP_001051129.1">
    <property type="nucleotide sequence ID" value="NC_002758.2"/>
</dbReference>
<dbReference type="SMR" id="P67578"/>
<dbReference type="KEGG" id="sav:SAV0490"/>
<dbReference type="HOGENOM" id="CLU_009710_9_4_9"/>
<dbReference type="PhylomeDB" id="P67578"/>
<dbReference type="Proteomes" id="UP000002481">
    <property type="component" value="Chromosome"/>
</dbReference>
<dbReference type="GO" id="GO:0005737">
    <property type="term" value="C:cytoplasm"/>
    <property type="evidence" value="ECO:0007669"/>
    <property type="project" value="UniProtKB-SubCell"/>
</dbReference>
<dbReference type="GO" id="GO:0005524">
    <property type="term" value="F:ATP binding"/>
    <property type="evidence" value="ECO:0007669"/>
    <property type="project" value="UniProtKB-UniRule"/>
</dbReference>
<dbReference type="GO" id="GO:0004825">
    <property type="term" value="F:methionine-tRNA ligase activity"/>
    <property type="evidence" value="ECO:0007669"/>
    <property type="project" value="UniProtKB-UniRule"/>
</dbReference>
<dbReference type="GO" id="GO:0000049">
    <property type="term" value="F:tRNA binding"/>
    <property type="evidence" value="ECO:0007669"/>
    <property type="project" value="UniProtKB-KW"/>
</dbReference>
<dbReference type="GO" id="GO:0006431">
    <property type="term" value="P:methionyl-tRNA aminoacylation"/>
    <property type="evidence" value="ECO:0007669"/>
    <property type="project" value="UniProtKB-UniRule"/>
</dbReference>
<dbReference type="CDD" id="cd07957">
    <property type="entry name" value="Anticodon_Ia_Met"/>
    <property type="match status" value="1"/>
</dbReference>
<dbReference type="CDD" id="cd00814">
    <property type="entry name" value="MetRS_core"/>
    <property type="match status" value="1"/>
</dbReference>
<dbReference type="CDD" id="cd02800">
    <property type="entry name" value="tRNA_bind_EcMetRS_like"/>
    <property type="match status" value="1"/>
</dbReference>
<dbReference type="FunFam" id="1.10.730.10:FF:000026">
    <property type="entry name" value="Methionine--tRNA ligase"/>
    <property type="match status" value="1"/>
</dbReference>
<dbReference type="FunFam" id="2.170.220.10:FF:000002">
    <property type="entry name" value="Methionine--tRNA ligase"/>
    <property type="match status" value="1"/>
</dbReference>
<dbReference type="FunFam" id="2.40.50.140:FF:000042">
    <property type="entry name" value="Methionine--tRNA ligase"/>
    <property type="match status" value="1"/>
</dbReference>
<dbReference type="Gene3D" id="2.170.220.10">
    <property type="match status" value="1"/>
</dbReference>
<dbReference type="Gene3D" id="3.40.50.620">
    <property type="entry name" value="HUPs"/>
    <property type="match status" value="1"/>
</dbReference>
<dbReference type="Gene3D" id="1.10.730.10">
    <property type="entry name" value="Isoleucyl-tRNA Synthetase, Domain 1"/>
    <property type="match status" value="1"/>
</dbReference>
<dbReference type="Gene3D" id="2.40.50.140">
    <property type="entry name" value="Nucleic acid-binding proteins"/>
    <property type="match status" value="1"/>
</dbReference>
<dbReference type="HAMAP" id="MF_01228">
    <property type="entry name" value="Met_tRNA_synth_type2"/>
    <property type="match status" value="1"/>
</dbReference>
<dbReference type="InterPro" id="IPR001412">
    <property type="entry name" value="aa-tRNA-synth_I_CS"/>
</dbReference>
<dbReference type="InterPro" id="IPR041872">
    <property type="entry name" value="Anticodon_Met"/>
</dbReference>
<dbReference type="InterPro" id="IPR013155">
    <property type="entry name" value="M/V/L/I-tRNA-synth_anticd-bd"/>
</dbReference>
<dbReference type="InterPro" id="IPR004495">
    <property type="entry name" value="Met-tRNA-synth_bsu_C"/>
</dbReference>
<dbReference type="InterPro" id="IPR014758">
    <property type="entry name" value="Met-tRNA_synth"/>
</dbReference>
<dbReference type="InterPro" id="IPR023457">
    <property type="entry name" value="Met-tRNA_synth_2"/>
</dbReference>
<dbReference type="InterPro" id="IPR015413">
    <property type="entry name" value="Methionyl/Leucyl_tRNA_Synth"/>
</dbReference>
<dbReference type="InterPro" id="IPR033911">
    <property type="entry name" value="MetRS_core"/>
</dbReference>
<dbReference type="InterPro" id="IPR012340">
    <property type="entry name" value="NA-bd_OB-fold"/>
</dbReference>
<dbReference type="InterPro" id="IPR014729">
    <property type="entry name" value="Rossmann-like_a/b/a_fold"/>
</dbReference>
<dbReference type="InterPro" id="IPR002547">
    <property type="entry name" value="tRNA-bd_dom"/>
</dbReference>
<dbReference type="InterPro" id="IPR009080">
    <property type="entry name" value="tRNAsynth_Ia_anticodon-bd"/>
</dbReference>
<dbReference type="NCBIfam" id="TIGR00398">
    <property type="entry name" value="metG"/>
    <property type="match status" value="1"/>
</dbReference>
<dbReference type="NCBIfam" id="TIGR00399">
    <property type="entry name" value="metG_C_term"/>
    <property type="match status" value="1"/>
</dbReference>
<dbReference type="NCBIfam" id="NF008900">
    <property type="entry name" value="PRK12267.1"/>
    <property type="match status" value="1"/>
</dbReference>
<dbReference type="PANTHER" id="PTHR43326:SF1">
    <property type="entry name" value="METHIONINE--TRNA LIGASE, MITOCHONDRIAL"/>
    <property type="match status" value="1"/>
</dbReference>
<dbReference type="PANTHER" id="PTHR43326">
    <property type="entry name" value="METHIONYL-TRNA SYNTHETASE"/>
    <property type="match status" value="1"/>
</dbReference>
<dbReference type="Pfam" id="PF08264">
    <property type="entry name" value="Anticodon_1"/>
    <property type="match status" value="1"/>
</dbReference>
<dbReference type="Pfam" id="PF09334">
    <property type="entry name" value="tRNA-synt_1g"/>
    <property type="match status" value="1"/>
</dbReference>
<dbReference type="Pfam" id="PF01588">
    <property type="entry name" value="tRNA_bind"/>
    <property type="match status" value="1"/>
</dbReference>
<dbReference type="PRINTS" id="PR01041">
    <property type="entry name" value="TRNASYNTHMET"/>
</dbReference>
<dbReference type="SUPFAM" id="SSF47323">
    <property type="entry name" value="Anticodon-binding domain of a subclass of class I aminoacyl-tRNA synthetases"/>
    <property type="match status" value="1"/>
</dbReference>
<dbReference type="SUPFAM" id="SSF50249">
    <property type="entry name" value="Nucleic acid-binding proteins"/>
    <property type="match status" value="1"/>
</dbReference>
<dbReference type="SUPFAM" id="SSF52374">
    <property type="entry name" value="Nucleotidylyl transferase"/>
    <property type="match status" value="1"/>
</dbReference>
<dbReference type="PROSITE" id="PS00178">
    <property type="entry name" value="AA_TRNA_LIGASE_I"/>
    <property type="match status" value="1"/>
</dbReference>
<dbReference type="PROSITE" id="PS50886">
    <property type="entry name" value="TRBD"/>
    <property type="match status" value="1"/>
</dbReference>
<protein>
    <recommendedName>
        <fullName evidence="1">Methionine--tRNA ligase</fullName>
        <ecNumber evidence="1">6.1.1.10</ecNumber>
    </recommendedName>
    <alternativeName>
        <fullName evidence="1">Methionyl-tRNA synthetase</fullName>
        <shortName evidence="1">MetRS</shortName>
    </alternativeName>
</protein>
<feature type="chain" id="PRO_0000139240" description="Methionine--tRNA ligase">
    <location>
        <begin position="1"/>
        <end position="657"/>
    </location>
</feature>
<feature type="domain" description="tRNA-binding" evidence="1">
    <location>
        <begin position="557"/>
        <end position="657"/>
    </location>
</feature>
<feature type="short sequence motif" description="'HIGH' region">
    <location>
        <begin position="13"/>
        <end position="23"/>
    </location>
</feature>
<feature type="short sequence motif" description="'KMSKS' region">
    <location>
        <begin position="308"/>
        <end position="312"/>
    </location>
</feature>
<feature type="binding site" evidence="1">
    <location>
        <position position="311"/>
    </location>
    <ligand>
        <name>ATP</name>
        <dbReference type="ChEBI" id="CHEBI:30616"/>
    </ligand>
</feature>
<evidence type="ECO:0000255" key="1">
    <source>
        <dbReference type="HAMAP-Rule" id="MF_01228"/>
    </source>
</evidence>
<keyword id="KW-0030">Aminoacyl-tRNA synthetase</keyword>
<keyword id="KW-0067">ATP-binding</keyword>
<keyword id="KW-0963">Cytoplasm</keyword>
<keyword id="KW-0436">Ligase</keyword>
<keyword id="KW-0547">Nucleotide-binding</keyword>
<keyword id="KW-0648">Protein biosynthesis</keyword>
<keyword id="KW-0694">RNA-binding</keyword>
<keyword id="KW-0820">tRNA-binding</keyword>
<comment type="function">
    <text evidence="1">Is required not only for elongation of protein synthesis but also for the initiation of all mRNA translation through initiator tRNA(fMet) aminoacylation.</text>
</comment>
<comment type="catalytic activity">
    <reaction evidence="1">
        <text>tRNA(Met) + L-methionine + ATP = L-methionyl-tRNA(Met) + AMP + diphosphate</text>
        <dbReference type="Rhea" id="RHEA:13481"/>
        <dbReference type="Rhea" id="RHEA-COMP:9667"/>
        <dbReference type="Rhea" id="RHEA-COMP:9698"/>
        <dbReference type="ChEBI" id="CHEBI:30616"/>
        <dbReference type="ChEBI" id="CHEBI:33019"/>
        <dbReference type="ChEBI" id="CHEBI:57844"/>
        <dbReference type="ChEBI" id="CHEBI:78442"/>
        <dbReference type="ChEBI" id="CHEBI:78530"/>
        <dbReference type="ChEBI" id="CHEBI:456215"/>
        <dbReference type="EC" id="6.1.1.10"/>
    </reaction>
</comment>
<comment type="subunit">
    <text evidence="1">Homodimer.</text>
</comment>
<comment type="subcellular location">
    <subcellularLocation>
        <location evidence="1">Cytoplasm</location>
    </subcellularLocation>
</comment>
<comment type="similarity">
    <text evidence="1">Belongs to the class-I aminoacyl-tRNA synthetase family. MetG type 2B subfamily.</text>
</comment>
<sequence length="657" mass="74873">MAKETFYITTPIYYPSGNLHIGHAYSTVAGDVIARYKRMQGYDVRYLTGTDEHGQKIQEKAQKAGKTEIEYLDEMIAGIKQLWAKLEISNDDFIRTTEERHKHVVEQVFERLLKQGDIYLGEYEGWYSVPDETYYTESQLVDPQYENGKIIGGKSPDSGHEVELVKEESYFFNISKYTDRLLEFYDQNPDFIQPPSRKNEMINNFIKPGLADLAVSRTSFNWGVHVPSNPKHVVYVWIDALVNYISALGYLSDDESLFNKYWPADIHLMAKEIVRFHSIIWPILLMALDLPLPKKVFAHGWILMKDGKMSKSKGNVVDPNILIDRYGLDATRYYLMRELPFGSDGVFTPEAFVERTNFDLANDLGNLVNRTISMVNKYFDGELPAYQGPLHELDEEMEAMALETVKSYTESMESLQFSVALSTVWKFISRTNKYIDETTPWVLAKDDSQKDMLGNVMAHLVENIRYAAVLLRPFLTHAPKEIFEQLNINNPQFMEFSSLEQYGVLTESIMVTGQPKPIFPRLDSEAEIAYIKESMQPPATEEEKEEIPSKPQIDIKDFDKVEIKAATIIDAEHVKKSDKLLKIQVDLDSEQRQIVSGIAKFYTPDDIIGKKVAVVTNLKPAKLMGQKSEGMILSAEKDGVLTLVSLPSAIPNGAVIK</sequence>
<name>SYM_STAAM</name>
<accession>P67578</accession>
<accession>Q99WB3</accession>
<reference key="1">
    <citation type="journal article" date="2001" name="Lancet">
        <title>Whole genome sequencing of meticillin-resistant Staphylococcus aureus.</title>
        <authorList>
            <person name="Kuroda M."/>
            <person name="Ohta T."/>
            <person name="Uchiyama I."/>
            <person name="Baba T."/>
            <person name="Yuzawa H."/>
            <person name="Kobayashi I."/>
            <person name="Cui L."/>
            <person name="Oguchi A."/>
            <person name="Aoki K."/>
            <person name="Nagai Y."/>
            <person name="Lian J.-Q."/>
            <person name="Ito T."/>
            <person name="Kanamori M."/>
            <person name="Matsumaru H."/>
            <person name="Maruyama A."/>
            <person name="Murakami H."/>
            <person name="Hosoyama A."/>
            <person name="Mizutani-Ui Y."/>
            <person name="Takahashi N.K."/>
            <person name="Sawano T."/>
            <person name="Inoue R."/>
            <person name="Kaito C."/>
            <person name="Sekimizu K."/>
            <person name="Hirakawa H."/>
            <person name="Kuhara S."/>
            <person name="Goto S."/>
            <person name="Yabuzaki J."/>
            <person name="Kanehisa M."/>
            <person name="Yamashita A."/>
            <person name="Oshima K."/>
            <person name="Furuya K."/>
            <person name="Yoshino C."/>
            <person name="Shiba T."/>
            <person name="Hattori M."/>
            <person name="Ogasawara N."/>
            <person name="Hayashi H."/>
            <person name="Hiramatsu K."/>
        </authorList>
    </citation>
    <scope>NUCLEOTIDE SEQUENCE [LARGE SCALE GENOMIC DNA]</scope>
    <source>
        <strain>Mu50 / ATCC 700699</strain>
    </source>
</reference>
<proteinExistence type="inferred from homology"/>